<reference key="1">
    <citation type="submission" date="2006-10" db="EMBL/GenBank/DDBJ databases">
        <title>Complete sequence of Syntrophobacter fumaroxidans MPOB.</title>
        <authorList>
            <consortium name="US DOE Joint Genome Institute"/>
            <person name="Copeland A."/>
            <person name="Lucas S."/>
            <person name="Lapidus A."/>
            <person name="Barry K."/>
            <person name="Detter J.C."/>
            <person name="Glavina del Rio T."/>
            <person name="Hammon N."/>
            <person name="Israni S."/>
            <person name="Pitluck S."/>
            <person name="Goltsman E.G."/>
            <person name="Martinez M."/>
            <person name="Schmutz J."/>
            <person name="Larimer F."/>
            <person name="Land M."/>
            <person name="Hauser L."/>
            <person name="Kyrpides N."/>
            <person name="Kim E."/>
            <person name="Boone D.R."/>
            <person name="Brockman F."/>
            <person name="Culley D."/>
            <person name="Ferry J."/>
            <person name="Gunsalus R."/>
            <person name="McInerney M.J."/>
            <person name="Morrison M."/>
            <person name="Plugge C."/>
            <person name="Rohlin L."/>
            <person name="Scholten J."/>
            <person name="Sieber J."/>
            <person name="Stams A.J.M."/>
            <person name="Worm P."/>
            <person name="Henstra A.M."/>
            <person name="Richardson P."/>
        </authorList>
    </citation>
    <scope>NUCLEOTIDE SEQUENCE [LARGE SCALE GENOMIC DNA]</scope>
    <source>
        <strain>DSM 10017 / MPOB</strain>
    </source>
</reference>
<name>DAPB_SYNFM</name>
<gene>
    <name evidence="1" type="primary">dapB</name>
    <name type="ordered locus">Sfum_0055</name>
</gene>
<sequence length="267" mass="28338">MVRAAVAGIAGRMGSRIAQLIRETDGIELAGGFEHSGHQAVNREISEIIGGSPTGLKVTSHIAQVLDTVDVVLDFTLAAASLEHLRQASARGKAMVIGSTGFAREQLEEAEKLAGRVPCVISPNMSMGVNVLFKVVGDVARLLGESFDVEIIEAHHRLKKDAPSGTALKLAQVAAGALGRNLEEVGVYARRGLIGERTGNEIGIQTIRGGDIVGEHTVMFAGSGERIEIVHRAQSRDNFARGAIRAALWVVRQPPGLYGMDHVLGMK</sequence>
<protein>
    <recommendedName>
        <fullName evidence="1">4-hydroxy-tetrahydrodipicolinate reductase</fullName>
        <shortName evidence="1">HTPA reductase</shortName>
        <ecNumber evidence="1">1.17.1.8</ecNumber>
    </recommendedName>
</protein>
<evidence type="ECO:0000255" key="1">
    <source>
        <dbReference type="HAMAP-Rule" id="MF_00102"/>
    </source>
</evidence>
<evidence type="ECO:0000305" key="2"/>
<keyword id="KW-0028">Amino-acid biosynthesis</keyword>
<keyword id="KW-0963">Cytoplasm</keyword>
<keyword id="KW-0220">Diaminopimelate biosynthesis</keyword>
<keyword id="KW-0457">Lysine biosynthesis</keyword>
<keyword id="KW-0520">NAD</keyword>
<keyword id="KW-0521">NADP</keyword>
<keyword id="KW-0560">Oxidoreductase</keyword>
<keyword id="KW-1185">Reference proteome</keyword>
<organism>
    <name type="scientific">Syntrophobacter fumaroxidans (strain DSM 10017 / MPOB)</name>
    <dbReference type="NCBI Taxonomy" id="335543"/>
    <lineage>
        <taxon>Bacteria</taxon>
        <taxon>Pseudomonadati</taxon>
        <taxon>Thermodesulfobacteriota</taxon>
        <taxon>Syntrophobacteria</taxon>
        <taxon>Syntrophobacterales</taxon>
        <taxon>Syntrophobacteraceae</taxon>
        <taxon>Syntrophobacter</taxon>
    </lineage>
</organism>
<comment type="function">
    <text evidence="1">Catalyzes the conversion of 4-hydroxy-tetrahydrodipicolinate (HTPA) to tetrahydrodipicolinate.</text>
</comment>
<comment type="catalytic activity">
    <reaction evidence="1">
        <text>(S)-2,3,4,5-tetrahydrodipicolinate + NAD(+) + H2O = (2S,4S)-4-hydroxy-2,3,4,5-tetrahydrodipicolinate + NADH + H(+)</text>
        <dbReference type="Rhea" id="RHEA:35323"/>
        <dbReference type="ChEBI" id="CHEBI:15377"/>
        <dbReference type="ChEBI" id="CHEBI:15378"/>
        <dbReference type="ChEBI" id="CHEBI:16845"/>
        <dbReference type="ChEBI" id="CHEBI:57540"/>
        <dbReference type="ChEBI" id="CHEBI:57945"/>
        <dbReference type="ChEBI" id="CHEBI:67139"/>
        <dbReference type="EC" id="1.17.1.8"/>
    </reaction>
</comment>
<comment type="catalytic activity">
    <reaction evidence="1">
        <text>(S)-2,3,4,5-tetrahydrodipicolinate + NADP(+) + H2O = (2S,4S)-4-hydroxy-2,3,4,5-tetrahydrodipicolinate + NADPH + H(+)</text>
        <dbReference type="Rhea" id="RHEA:35331"/>
        <dbReference type="ChEBI" id="CHEBI:15377"/>
        <dbReference type="ChEBI" id="CHEBI:15378"/>
        <dbReference type="ChEBI" id="CHEBI:16845"/>
        <dbReference type="ChEBI" id="CHEBI:57783"/>
        <dbReference type="ChEBI" id="CHEBI:58349"/>
        <dbReference type="ChEBI" id="CHEBI:67139"/>
        <dbReference type="EC" id="1.17.1.8"/>
    </reaction>
</comment>
<comment type="pathway">
    <text evidence="1">Amino-acid biosynthesis; L-lysine biosynthesis via DAP pathway; (S)-tetrahydrodipicolinate from L-aspartate: step 4/4.</text>
</comment>
<comment type="subcellular location">
    <subcellularLocation>
        <location evidence="1">Cytoplasm</location>
    </subcellularLocation>
</comment>
<comment type="similarity">
    <text evidence="1">Belongs to the DapB family.</text>
</comment>
<comment type="caution">
    <text evidence="2">Was originally thought to be a dihydrodipicolinate reductase (DHDPR), catalyzing the conversion of dihydrodipicolinate to tetrahydrodipicolinate. However, it was shown in E.coli that the substrate of the enzymatic reaction is not dihydrodipicolinate (DHDP) but in fact (2S,4S)-4-hydroxy-2,3,4,5-tetrahydrodipicolinic acid (HTPA), the product released by the DapA-catalyzed reaction.</text>
</comment>
<accession>A0LEA6</accession>
<feature type="chain" id="PRO_1000008652" description="4-hydroxy-tetrahydrodipicolinate reductase">
    <location>
        <begin position="1"/>
        <end position="267"/>
    </location>
</feature>
<feature type="active site" description="Proton donor/acceptor" evidence="1">
    <location>
        <position position="155"/>
    </location>
</feature>
<feature type="active site" description="Proton donor" evidence="1">
    <location>
        <position position="159"/>
    </location>
</feature>
<feature type="binding site" evidence="1">
    <location>
        <begin position="8"/>
        <end position="13"/>
    </location>
    <ligand>
        <name>NAD(+)</name>
        <dbReference type="ChEBI" id="CHEBI:57540"/>
    </ligand>
</feature>
<feature type="binding site" evidence="1">
    <location>
        <position position="34"/>
    </location>
    <ligand>
        <name>NAD(+)</name>
        <dbReference type="ChEBI" id="CHEBI:57540"/>
    </ligand>
</feature>
<feature type="binding site" evidence="1">
    <location>
        <begin position="98"/>
        <end position="100"/>
    </location>
    <ligand>
        <name>NAD(+)</name>
        <dbReference type="ChEBI" id="CHEBI:57540"/>
    </ligand>
</feature>
<feature type="binding site" evidence="1">
    <location>
        <begin position="122"/>
        <end position="125"/>
    </location>
    <ligand>
        <name>NAD(+)</name>
        <dbReference type="ChEBI" id="CHEBI:57540"/>
    </ligand>
</feature>
<feature type="binding site" evidence="1">
    <location>
        <position position="156"/>
    </location>
    <ligand>
        <name>(S)-2,3,4,5-tetrahydrodipicolinate</name>
        <dbReference type="ChEBI" id="CHEBI:16845"/>
    </ligand>
</feature>
<feature type="binding site" evidence="1">
    <location>
        <begin position="165"/>
        <end position="166"/>
    </location>
    <ligand>
        <name>(S)-2,3,4,5-tetrahydrodipicolinate</name>
        <dbReference type="ChEBI" id="CHEBI:16845"/>
    </ligand>
</feature>
<proteinExistence type="inferred from homology"/>
<dbReference type="EC" id="1.17.1.8" evidence="1"/>
<dbReference type="EMBL" id="CP000478">
    <property type="protein sequence ID" value="ABK15758.1"/>
    <property type="molecule type" value="Genomic_DNA"/>
</dbReference>
<dbReference type="RefSeq" id="WP_011696931.1">
    <property type="nucleotide sequence ID" value="NC_008554.1"/>
</dbReference>
<dbReference type="SMR" id="A0LEA6"/>
<dbReference type="FunCoup" id="A0LEA6">
    <property type="interactions" value="499"/>
</dbReference>
<dbReference type="STRING" id="335543.Sfum_0055"/>
<dbReference type="KEGG" id="sfu:Sfum_0055"/>
<dbReference type="eggNOG" id="COG0289">
    <property type="taxonomic scope" value="Bacteria"/>
</dbReference>
<dbReference type="HOGENOM" id="CLU_047479_2_1_7"/>
<dbReference type="InParanoid" id="A0LEA6"/>
<dbReference type="OrthoDB" id="9790352at2"/>
<dbReference type="UniPathway" id="UPA00034">
    <property type="reaction ID" value="UER00018"/>
</dbReference>
<dbReference type="Proteomes" id="UP000001784">
    <property type="component" value="Chromosome"/>
</dbReference>
<dbReference type="GO" id="GO:0005829">
    <property type="term" value="C:cytosol"/>
    <property type="evidence" value="ECO:0007669"/>
    <property type="project" value="TreeGrafter"/>
</dbReference>
<dbReference type="GO" id="GO:0008839">
    <property type="term" value="F:4-hydroxy-tetrahydrodipicolinate reductase"/>
    <property type="evidence" value="ECO:0007669"/>
    <property type="project" value="UniProtKB-EC"/>
</dbReference>
<dbReference type="GO" id="GO:0051287">
    <property type="term" value="F:NAD binding"/>
    <property type="evidence" value="ECO:0007669"/>
    <property type="project" value="UniProtKB-UniRule"/>
</dbReference>
<dbReference type="GO" id="GO:0050661">
    <property type="term" value="F:NADP binding"/>
    <property type="evidence" value="ECO:0007669"/>
    <property type="project" value="UniProtKB-UniRule"/>
</dbReference>
<dbReference type="GO" id="GO:0016726">
    <property type="term" value="F:oxidoreductase activity, acting on CH or CH2 groups, NAD or NADP as acceptor"/>
    <property type="evidence" value="ECO:0007669"/>
    <property type="project" value="UniProtKB-UniRule"/>
</dbReference>
<dbReference type="GO" id="GO:0019877">
    <property type="term" value="P:diaminopimelate biosynthetic process"/>
    <property type="evidence" value="ECO:0007669"/>
    <property type="project" value="UniProtKB-UniRule"/>
</dbReference>
<dbReference type="GO" id="GO:0009089">
    <property type="term" value="P:lysine biosynthetic process via diaminopimelate"/>
    <property type="evidence" value="ECO:0007669"/>
    <property type="project" value="UniProtKB-UniRule"/>
</dbReference>
<dbReference type="CDD" id="cd02274">
    <property type="entry name" value="DHDPR_N"/>
    <property type="match status" value="1"/>
</dbReference>
<dbReference type="FunFam" id="3.30.360.10:FF:000004">
    <property type="entry name" value="4-hydroxy-tetrahydrodipicolinate reductase"/>
    <property type="match status" value="1"/>
</dbReference>
<dbReference type="Gene3D" id="3.30.360.10">
    <property type="entry name" value="Dihydrodipicolinate Reductase, domain 2"/>
    <property type="match status" value="1"/>
</dbReference>
<dbReference type="Gene3D" id="3.40.50.720">
    <property type="entry name" value="NAD(P)-binding Rossmann-like Domain"/>
    <property type="match status" value="1"/>
</dbReference>
<dbReference type="HAMAP" id="MF_00102">
    <property type="entry name" value="DapB"/>
    <property type="match status" value="1"/>
</dbReference>
<dbReference type="InterPro" id="IPR022663">
    <property type="entry name" value="DapB_C"/>
</dbReference>
<dbReference type="InterPro" id="IPR000846">
    <property type="entry name" value="DapB_N"/>
</dbReference>
<dbReference type="InterPro" id="IPR022664">
    <property type="entry name" value="DapB_N_CS"/>
</dbReference>
<dbReference type="InterPro" id="IPR023940">
    <property type="entry name" value="DHDPR_bac"/>
</dbReference>
<dbReference type="InterPro" id="IPR036291">
    <property type="entry name" value="NAD(P)-bd_dom_sf"/>
</dbReference>
<dbReference type="NCBIfam" id="TIGR00036">
    <property type="entry name" value="dapB"/>
    <property type="match status" value="1"/>
</dbReference>
<dbReference type="PANTHER" id="PTHR20836:SF0">
    <property type="entry name" value="4-HYDROXY-TETRAHYDRODIPICOLINATE REDUCTASE 1, CHLOROPLASTIC-RELATED"/>
    <property type="match status" value="1"/>
</dbReference>
<dbReference type="PANTHER" id="PTHR20836">
    <property type="entry name" value="DIHYDRODIPICOLINATE REDUCTASE"/>
    <property type="match status" value="1"/>
</dbReference>
<dbReference type="Pfam" id="PF05173">
    <property type="entry name" value="DapB_C"/>
    <property type="match status" value="1"/>
</dbReference>
<dbReference type="Pfam" id="PF01113">
    <property type="entry name" value="DapB_N"/>
    <property type="match status" value="1"/>
</dbReference>
<dbReference type="PIRSF" id="PIRSF000161">
    <property type="entry name" value="DHPR"/>
    <property type="match status" value="1"/>
</dbReference>
<dbReference type="SUPFAM" id="SSF55347">
    <property type="entry name" value="Glyceraldehyde-3-phosphate dehydrogenase-like, C-terminal domain"/>
    <property type="match status" value="1"/>
</dbReference>
<dbReference type="SUPFAM" id="SSF51735">
    <property type="entry name" value="NAD(P)-binding Rossmann-fold domains"/>
    <property type="match status" value="1"/>
</dbReference>
<dbReference type="PROSITE" id="PS01298">
    <property type="entry name" value="DAPB"/>
    <property type="match status" value="1"/>
</dbReference>